<keyword id="KW-1015">Disulfide bond</keyword>
<keyword id="KW-0960">Knottin</keyword>
<keyword id="KW-0964">Secreted</keyword>
<keyword id="KW-0800">Toxin</keyword>
<reference key="1">
    <citation type="journal article" date="2009" name="PLoS ONE">
        <title>Geographic variation in venom allelic composition and diets of the widespread predatory marine gastropod Conus ebraeus.</title>
        <authorList>
            <person name="Duda T.F. Jr."/>
            <person name="Chang D."/>
            <person name="Lewis B.D."/>
            <person name="Lee T."/>
        </authorList>
    </citation>
    <scope>NUCLEOTIDE SEQUENCE [GENOMIC DNA]</scope>
    <source>
        <strain>Okinawa</strain>
        <tissue>Foot</tissue>
    </source>
</reference>
<feature type="peptide" id="PRO_0000414642" description="Conotoxin Eb6.17">
    <location>
        <begin position="1" status="less than"/>
        <end position="26"/>
    </location>
</feature>
<feature type="disulfide bond" evidence="1">
    <location>
        <begin position="7"/>
        <end position="18"/>
    </location>
</feature>
<feature type="disulfide bond" evidence="1">
    <location>
        <begin position="13"/>
        <end position="25"/>
    </location>
</feature>
<feature type="disulfide bond" evidence="1">
    <location>
        <begin status="unknown"/>
        <end position="14"/>
    </location>
</feature>
<feature type="non-terminal residue">
    <location>
        <position position="1"/>
    </location>
</feature>
<dbReference type="EMBL" id="FJ834434">
    <property type="protein sequence ID" value="ACU56813.1"/>
    <property type="molecule type" value="Genomic_DNA"/>
</dbReference>
<dbReference type="SMR" id="C7T1P2"/>
<dbReference type="ConoServer" id="3839">
    <property type="toxin name" value="Eb6.17 (partial)"/>
</dbReference>
<dbReference type="GO" id="GO:0005576">
    <property type="term" value="C:extracellular region"/>
    <property type="evidence" value="ECO:0007669"/>
    <property type="project" value="UniProtKB-SubCell"/>
</dbReference>
<dbReference type="GO" id="GO:0090729">
    <property type="term" value="F:toxin activity"/>
    <property type="evidence" value="ECO:0007669"/>
    <property type="project" value="UniProtKB-KW"/>
</dbReference>
<accession>C7T1P2</accession>
<evidence type="ECO:0000250" key="1"/>
<evidence type="ECO:0000305" key="2"/>
<protein>
    <recommendedName>
        <fullName>Conotoxin Eb6.17</fullName>
    </recommendedName>
</protein>
<organism>
    <name type="scientific">Conus ebraeus</name>
    <name type="common">Hebrew cone</name>
    <dbReference type="NCBI Taxonomy" id="89425"/>
    <lineage>
        <taxon>Eukaryota</taxon>
        <taxon>Metazoa</taxon>
        <taxon>Spiralia</taxon>
        <taxon>Lophotrochozoa</taxon>
        <taxon>Mollusca</taxon>
        <taxon>Gastropoda</taxon>
        <taxon>Caenogastropoda</taxon>
        <taxon>Neogastropoda</taxon>
        <taxon>Conoidea</taxon>
        <taxon>Conidae</taxon>
        <taxon>Conus</taxon>
        <taxon>Virroconus</taxon>
    </lineage>
</organism>
<comment type="subcellular location">
    <subcellularLocation>
        <location evidence="1">Secreted</location>
    </subcellularLocation>
</comment>
<comment type="tissue specificity">
    <text>Expressed by the venom duct.</text>
</comment>
<comment type="domain">
    <text evidence="1">The presence of a 'disulfide through disulfide knot' structurally defines this protein as a knottin.</text>
</comment>
<comment type="domain">
    <text>The cysteine framework is VI/VII (C-C-CC-C-C).</text>
</comment>
<comment type="miscellaneous">
    <text>This peptide corresponds to allele E1j. Has not been merged with other alleles since they may differ due to geographic variation (see strain in PubMed:19606224).</text>
</comment>
<comment type="similarity">
    <text evidence="2">Belongs to the conotoxin O1 superfamily.</text>
</comment>
<gene>
    <name type="primary">E1</name>
</gene>
<sequence length="26" mass="2675">THSGGACNSHDQCCNAFCSTATRTCV</sequence>
<proteinExistence type="evidence at transcript level"/>
<name>O16H_CONEA</name>